<sequence length="1342" mass="151237">MVFSYTEKKRIRKDFGKRPQVLDIPYLLSIQLGSFQKFVKKDPEGQNGLESAFRSVFPIKSYNGNAELRYLDYKLGEPVFDVKECQIRGMTFAAPLRVQLCLVIYERDGSAYNTIKRTQQQEVYMGEIPLMTDNGTFIINGIERVVVSQLHRSPGVFFDSDKGKTHSSGKILYTARIIPYRGSWLDFEFDLKDNLFVRIDRRRKLPVTVLLRALDYTNDQILNTFFNTVVYEFKDDLLFMNLVPERLRGETVSFDIKANDIIYVERGRRITSKHINKLKADNIIKVEVPLNYLMGKVIIKDYLDIKNGELIVAANTEISMDILHNLVKSGFNIIETLFSNDLDYGNYISETLRIDSTVTRFDALVEIYRVMRPGEPPTKEAAEYLFESLFFLEERYDLSDVGRMKFNRSLQRDDISGSGVLTKNDIIDVIKKLIDIRNGKGDVDDIDHLGNRRIRSVGEMAENQFRIGLVRVERAVKERLSLGDLDVLTPQDLINAKPISAAVREFFNSSQLSQFMDQNNPLSEITHKRRISALGPGGLTRERAGFEVRDVHPTHYGRVCPIETPEGPNIGLINSLSVYARTNKYGFLETPYRRVCDGKVSNDIHYLSAIEEGDFIIAQANTNLNKDGQFIDDLITCRNKGESGLFRKDQIDYMDVSTQQIVSVAASLIPFLEHDDANRALMGANMQRQAVPVIRSEKPLVGTGMERSVAVDSGVTVVAKRGGMVKYVDASRIVIHVNVNEISVEEAGIDIYNLKKYVRSNQNTCINQRPCVELGELIKKGDVIADGPSTDLGELALGQNMRIAFMPWNGYNFEDSMLVSERVVQEDRFTSIHIQELSCISRDTKLGPEEITSDIPNIGETALSKLDEVGVVYIGAEVVGGDILVGKITPKGETQLTPEEKLLRAIFGEKASDVKDSSLRVPNGICGTVIDVQIFTRDGIKKDKRALNIELTKLNQIKKDLGEELKIFESALFDRVYALLISSGVKKESLLDMNRCAWLNLKLKDITKQNQLLQLSHQYLDLKRIFEEKISIQYQKITQGDELAPGILKVVKVYLAVKRQIQPGDKMAGRHGNKGVISKINPVEDMPYDEYGVPVDIVLNPLGVPSRMNIGQILETHLGMAAKGIGDQINLMLQQHQEINKLRKFIQKAYKLGVGVRQNIDLNTFSDLEVLRLAKNLKSGMPIATPVFDGATEQEIKELLQLSGLPTSGQITLFDGCTGEVFERKVTVGYMYMLKLNHLVDDKMHARSTGSYSLVTQQPLGGKAQFGGQRFGEMEVWALEAYGASYTLQEMLTVKSDDVNGRTKMYKNIIDGNHMMEPGMPESFNVLLKEIRSLAINIELDD</sequence>
<accession>Q7VRP7</accession>
<evidence type="ECO:0000255" key="1">
    <source>
        <dbReference type="HAMAP-Rule" id="MF_01321"/>
    </source>
</evidence>
<keyword id="KW-0240">DNA-directed RNA polymerase</keyword>
<keyword id="KW-0548">Nucleotidyltransferase</keyword>
<keyword id="KW-1185">Reference proteome</keyword>
<keyword id="KW-0804">Transcription</keyword>
<keyword id="KW-0808">Transferase</keyword>
<reference key="1">
    <citation type="journal article" date="2003" name="Proc. Natl. Acad. Sci. U.S.A.">
        <title>The genome sequence of Blochmannia floridanus: comparative analysis of reduced genomes.</title>
        <authorList>
            <person name="Gil R."/>
            <person name="Silva F.J."/>
            <person name="Zientz E."/>
            <person name="Delmotte F."/>
            <person name="Gonzalez-Candelas F."/>
            <person name="Latorre A."/>
            <person name="Rausell C."/>
            <person name="Kamerbeek J."/>
            <person name="Gadau J."/>
            <person name="Hoelldobler B."/>
            <person name="van Ham R.C.H.J."/>
            <person name="Gross R."/>
            <person name="Moya A."/>
        </authorList>
    </citation>
    <scope>NUCLEOTIDE SEQUENCE [LARGE SCALE GENOMIC DNA]</scope>
</reference>
<protein>
    <recommendedName>
        <fullName evidence="1">DNA-directed RNA polymerase subunit beta</fullName>
        <shortName evidence="1">RNAP subunit beta</shortName>
        <ecNumber evidence="1">2.7.7.6</ecNumber>
    </recommendedName>
    <alternativeName>
        <fullName evidence="1">RNA polymerase subunit beta</fullName>
    </alternativeName>
    <alternativeName>
        <fullName evidence="1">Transcriptase subunit beta</fullName>
    </alternativeName>
</protein>
<dbReference type="EC" id="2.7.7.6" evidence="1"/>
<dbReference type="EMBL" id="BX248583">
    <property type="protein sequence ID" value="CAD83239.1"/>
    <property type="molecule type" value="Genomic_DNA"/>
</dbReference>
<dbReference type="SMR" id="Q7VRP7"/>
<dbReference type="STRING" id="203907.Bfl557"/>
<dbReference type="KEGG" id="bfl:Bfl557"/>
<dbReference type="eggNOG" id="COG0085">
    <property type="taxonomic scope" value="Bacteria"/>
</dbReference>
<dbReference type="HOGENOM" id="CLU_000524_4_0_6"/>
<dbReference type="OrthoDB" id="9803954at2"/>
<dbReference type="Proteomes" id="UP000002192">
    <property type="component" value="Chromosome"/>
</dbReference>
<dbReference type="GO" id="GO:0000428">
    <property type="term" value="C:DNA-directed RNA polymerase complex"/>
    <property type="evidence" value="ECO:0007669"/>
    <property type="project" value="UniProtKB-KW"/>
</dbReference>
<dbReference type="GO" id="GO:0003677">
    <property type="term" value="F:DNA binding"/>
    <property type="evidence" value="ECO:0007669"/>
    <property type="project" value="UniProtKB-UniRule"/>
</dbReference>
<dbReference type="GO" id="GO:0003899">
    <property type="term" value="F:DNA-directed RNA polymerase activity"/>
    <property type="evidence" value="ECO:0007669"/>
    <property type="project" value="UniProtKB-UniRule"/>
</dbReference>
<dbReference type="GO" id="GO:0032549">
    <property type="term" value="F:ribonucleoside binding"/>
    <property type="evidence" value="ECO:0007669"/>
    <property type="project" value="InterPro"/>
</dbReference>
<dbReference type="GO" id="GO:0006351">
    <property type="term" value="P:DNA-templated transcription"/>
    <property type="evidence" value="ECO:0007669"/>
    <property type="project" value="UniProtKB-UniRule"/>
</dbReference>
<dbReference type="CDD" id="cd00653">
    <property type="entry name" value="RNA_pol_B_RPB2"/>
    <property type="match status" value="1"/>
</dbReference>
<dbReference type="FunFam" id="2.30.150.10:FF:000001">
    <property type="entry name" value="DNA-directed RNA polymerase subunit beta"/>
    <property type="match status" value="1"/>
</dbReference>
<dbReference type="FunFam" id="2.40.270.10:FF:000003">
    <property type="entry name" value="DNA-directed RNA polymerase subunit beta"/>
    <property type="match status" value="1"/>
</dbReference>
<dbReference type="FunFam" id="2.40.270.10:FF:000004">
    <property type="entry name" value="DNA-directed RNA polymerase subunit beta"/>
    <property type="match status" value="1"/>
</dbReference>
<dbReference type="FunFam" id="2.40.50.100:FF:000006">
    <property type="entry name" value="DNA-directed RNA polymerase subunit beta"/>
    <property type="match status" value="1"/>
</dbReference>
<dbReference type="FunFam" id="2.40.50.150:FF:000001">
    <property type="entry name" value="DNA-directed RNA polymerase subunit beta"/>
    <property type="match status" value="1"/>
</dbReference>
<dbReference type="FunFam" id="3.90.1100.10:FF:000002">
    <property type="entry name" value="DNA-directed RNA polymerase subunit beta"/>
    <property type="match status" value="1"/>
</dbReference>
<dbReference type="FunFam" id="3.90.1110.10:FF:000001">
    <property type="entry name" value="DNA-directed RNA polymerase subunit beta"/>
    <property type="match status" value="1"/>
</dbReference>
<dbReference type="FunFam" id="3.90.1110.10:FF:000004">
    <property type="entry name" value="DNA-directed RNA polymerase subunit beta"/>
    <property type="match status" value="1"/>
</dbReference>
<dbReference type="FunFam" id="3.90.1800.10:FF:000001">
    <property type="entry name" value="DNA-directed RNA polymerase subunit beta"/>
    <property type="match status" value="1"/>
</dbReference>
<dbReference type="Gene3D" id="2.40.50.100">
    <property type="match status" value="1"/>
</dbReference>
<dbReference type="Gene3D" id="2.40.50.150">
    <property type="match status" value="1"/>
</dbReference>
<dbReference type="Gene3D" id="3.90.1100.10">
    <property type="match status" value="2"/>
</dbReference>
<dbReference type="Gene3D" id="2.30.150.10">
    <property type="entry name" value="DNA-directed RNA polymerase, beta subunit, external 1 domain"/>
    <property type="match status" value="1"/>
</dbReference>
<dbReference type="Gene3D" id="2.40.270.10">
    <property type="entry name" value="DNA-directed RNA polymerase, subunit 2, domain 6"/>
    <property type="match status" value="2"/>
</dbReference>
<dbReference type="Gene3D" id="3.90.1800.10">
    <property type="entry name" value="RNA polymerase alpha subunit dimerisation domain"/>
    <property type="match status" value="1"/>
</dbReference>
<dbReference type="Gene3D" id="3.90.1110.10">
    <property type="entry name" value="RNA polymerase Rpb2, domain 2"/>
    <property type="match status" value="2"/>
</dbReference>
<dbReference type="HAMAP" id="MF_01321">
    <property type="entry name" value="RNApol_bact_RpoB"/>
    <property type="match status" value="1"/>
</dbReference>
<dbReference type="InterPro" id="IPR042107">
    <property type="entry name" value="DNA-dir_RNA_pol_bsu_ext_1_sf"/>
</dbReference>
<dbReference type="InterPro" id="IPR019462">
    <property type="entry name" value="DNA-dir_RNA_pol_bsu_external_1"/>
</dbReference>
<dbReference type="InterPro" id="IPR015712">
    <property type="entry name" value="DNA-dir_RNA_pol_su2"/>
</dbReference>
<dbReference type="InterPro" id="IPR007120">
    <property type="entry name" value="DNA-dir_RNAP_su2_dom"/>
</dbReference>
<dbReference type="InterPro" id="IPR037033">
    <property type="entry name" value="DNA-dir_RNAP_su2_hyb_sf"/>
</dbReference>
<dbReference type="InterPro" id="IPR018247">
    <property type="entry name" value="EF_Hand_1_Ca_BS"/>
</dbReference>
<dbReference type="InterPro" id="IPR010243">
    <property type="entry name" value="RNA_pol_bsu_bac"/>
</dbReference>
<dbReference type="InterPro" id="IPR007121">
    <property type="entry name" value="RNA_pol_bsu_CS"/>
</dbReference>
<dbReference type="InterPro" id="IPR007644">
    <property type="entry name" value="RNA_pol_bsu_protrusion"/>
</dbReference>
<dbReference type="InterPro" id="IPR007642">
    <property type="entry name" value="RNA_pol_Rpb2_2"/>
</dbReference>
<dbReference type="InterPro" id="IPR037034">
    <property type="entry name" value="RNA_pol_Rpb2_2_sf"/>
</dbReference>
<dbReference type="InterPro" id="IPR007645">
    <property type="entry name" value="RNA_pol_Rpb2_3"/>
</dbReference>
<dbReference type="InterPro" id="IPR007641">
    <property type="entry name" value="RNA_pol_Rpb2_7"/>
</dbReference>
<dbReference type="InterPro" id="IPR014724">
    <property type="entry name" value="RNA_pol_RPB2_OB-fold"/>
</dbReference>
<dbReference type="NCBIfam" id="NF001616">
    <property type="entry name" value="PRK00405.1"/>
    <property type="match status" value="1"/>
</dbReference>
<dbReference type="NCBIfam" id="TIGR02013">
    <property type="entry name" value="rpoB"/>
    <property type="match status" value="1"/>
</dbReference>
<dbReference type="PANTHER" id="PTHR20856">
    <property type="entry name" value="DNA-DIRECTED RNA POLYMERASE I SUBUNIT 2"/>
    <property type="match status" value="1"/>
</dbReference>
<dbReference type="Pfam" id="PF04563">
    <property type="entry name" value="RNA_pol_Rpb2_1"/>
    <property type="match status" value="1"/>
</dbReference>
<dbReference type="Pfam" id="PF04561">
    <property type="entry name" value="RNA_pol_Rpb2_2"/>
    <property type="match status" value="2"/>
</dbReference>
<dbReference type="Pfam" id="PF04565">
    <property type="entry name" value="RNA_pol_Rpb2_3"/>
    <property type="match status" value="1"/>
</dbReference>
<dbReference type="Pfam" id="PF10385">
    <property type="entry name" value="RNA_pol_Rpb2_45"/>
    <property type="match status" value="1"/>
</dbReference>
<dbReference type="Pfam" id="PF00562">
    <property type="entry name" value="RNA_pol_Rpb2_6"/>
    <property type="match status" value="1"/>
</dbReference>
<dbReference type="Pfam" id="PF04560">
    <property type="entry name" value="RNA_pol_Rpb2_7"/>
    <property type="match status" value="1"/>
</dbReference>
<dbReference type="SUPFAM" id="SSF64484">
    <property type="entry name" value="beta and beta-prime subunits of DNA dependent RNA-polymerase"/>
    <property type="match status" value="1"/>
</dbReference>
<dbReference type="PROSITE" id="PS01166">
    <property type="entry name" value="RNA_POL_BETA"/>
    <property type="match status" value="1"/>
</dbReference>
<proteinExistence type="inferred from homology"/>
<name>RPOB_BLOFL</name>
<feature type="chain" id="PRO_0000047876" description="DNA-directed RNA polymerase subunit beta">
    <location>
        <begin position="1"/>
        <end position="1342"/>
    </location>
</feature>
<gene>
    <name evidence="1" type="primary">rpoB</name>
    <name type="ordered locus">Bfl557</name>
</gene>
<comment type="function">
    <text evidence="1">DNA-dependent RNA polymerase catalyzes the transcription of DNA into RNA using the four ribonucleoside triphosphates as substrates.</text>
</comment>
<comment type="catalytic activity">
    <reaction evidence="1">
        <text>RNA(n) + a ribonucleoside 5'-triphosphate = RNA(n+1) + diphosphate</text>
        <dbReference type="Rhea" id="RHEA:21248"/>
        <dbReference type="Rhea" id="RHEA-COMP:14527"/>
        <dbReference type="Rhea" id="RHEA-COMP:17342"/>
        <dbReference type="ChEBI" id="CHEBI:33019"/>
        <dbReference type="ChEBI" id="CHEBI:61557"/>
        <dbReference type="ChEBI" id="CHEBI:140395"/>
        <dbReference type="EC" id="2.7.7.6"/>
    </reaction>
</comment>
<comment type="subunit">
    <text evidence="1">The RNAP catalytic core consists of 2 alpha, 1 beta, 1 beta' and 1 omega subunit. When a sigma factor is associated with the core the holoenzyme is formed, which can initiate transcription.</text>
</comment>
<comment type="similarity">
    <text evidence="1">Belongs to the RNA polymerase beta chain family.</text>
</comment>
<organism>
    <name type="scientific">Blochmanniella floridana</name>
    <dbReference type="NCBI Taxonomy" id="203907"/>
    <lineage>
        <taxon>Bacteria</taxon>
        <taxon>Pseudomonadati</taxon>
        <taxon>Pseudomonadota</taxon>
        <taxon>Gammaproteobacteria</taxon>
        <taxon>Enterobacterales</taxon>
        <taxon>Enterobacteriaceae</taxon>
        <taxon>ant endosymbionts</taxon>
        <taxon>Candidatus Blochmanniella</taxon>
    </lineage>
</organism>